<proteinExistence type="inferred from homology"/>
<keyword id="KW-0997">Cell inner membrane</keyword>
<keyword id="KW-1003">Cell membrane</keyword>
<keyword id="KW-0441">Lipid A biosynthesis</keyword>
<keyword id="KW-0444">Lipid biosynthesis</keyword>
<keyword id="KW-0443">Lipid metabolism</keyword>
<keyword id="KW-0448">Lipopolysaccharide biosynthesis</keyword>
<keyword id="KW-0472">Membrane</keyword>
<keyword id="KW-0812">Transmembrane</keyword>
<keyword id="KW-1133">Transmembrane helix</keyword>
<keyword id="KW-0813">Transport</keyword>
<gene>
    <name evidence="1" type="primary">arnE</name>
    <name type="ordered locus">SBO_2294.1</name>
</gene>
<accession>P0CB29</accession>
<evidence type="ECO:0000255" key="1">
    <source>
        <dbReference type="HAMAP-Rule" id="MF_01869"/>
    </source>
</evidence>
<name>ARNE_SHIBS</name>
<feature type="chain" id="PRO_0000383005" description="Probable 4-amino-4-deoxy-L-arabinose-phosphoundecaprenol flippase subunit ArnE">
    <location>
        <begin position="1"/>
        <end position="111"/>
    </location>
</feature>
<feature type="transmembrane region" description="Helical" evidence="1">
    <location>
        <begin position="36"/>
        <end position="56"/>
    </location>
</feature>
<feature type="transmembrane region" description="Helical" evidence="1">
    <location>
        <begin position="61"/>
        <end position="81"/>
    </location>
</feature>
<feature type="transmembrane region" description="Helical" evidence="1">
    <location>
        <begin position="88"/>
        <end position="108"/>
    </location>
</feature>
<feature type="domain" description="EamA" evidence="1">
    <location>
        <begin position="40"/>
        <end position="109"/>
    </location>
</feature>
<protein>
    <recommendedName>
        <fullName evidence="1">Probable 4-amino-4-deoxy-L-arabinose-phosphoundecaprenol flippase subunit ArnE</fullName>
        <shortName evidence="1">L-Ara4N-phosphoundecaprenol flippase subunit ArnE</shortName>
    </recommendedName>
    <alternativeName>
        <fullName evidence="1">Undecaprenyl phosphate-aminoarabinose flippase subunit ArnE</fullName>
    </alternativeName>
</protein>
<reference key="1">
    <citation type="journal article" date="2005" name="Nucleic Acids Res.">
        <title>Genome dynamics and diversity of Shigella species, the etiologic agents of bacillary dysentery.</title>
        <authorList>
            <person name="Yang F."/>
            <person name="Yang J."/>
            <person name="Zhang X."/>
            <person name="Chen L."/>
            <person name="Jiang Y."/>
            <person name="Yan Y."/>
            <person name="Tang X."/>
            <person name="Wang J."/>
            <person name="Xiong Z."/>
            <person name="Dong J."/>
            <person name="Xue Y."/>
            <person name="Zhu Y."/>
            <person name="Xu X."/>
            <person name="Sun L."/>
            <person name="Chen S."/>
            <person name="Nie H."/>
            <person name="Peng J."/>
            <person name="Xu J."/>
            <person name="Wang Y."/>
            <person name="Yuan Z."/>
            <person name="Wen Y."/>
            <person name="Yao Z."/>
            <person name="Shen Y."/>
            <person name="Qiang B."/>
            <person name="Hou Y."/>
            <person name="Yu J."/>
            <person name="Jin Q."/>
        </authorList>
    </citation>
    <scope>NUCLEOTIDE SEQUENCE [LARGE SCALE GENOMIC DNA]</scope>
    <source>
        <strain>Sb227</strain>
    </source>
</reference>
<dbReference type="EMBL" id="CP000036">
    <property type="status" value="NOT_ANNOTATED_CDS"/>
    <property type="molecule type" value="Genomic_DNA"/>
</dbReference>
<dbReference type="RefSeq" id="WP_000638031.1">
    <property type="nucleotide sequence ID" value="NC_007613.1"/>
</dbReference>
<dbReference type="SMR" id="P0CB29"/>
<dbReference type="GeneID" id="93774916"/>
<dbReference type="UniPathway" id="UPA00030"/>
<dbReference type="Proteomes" id="UP000007067">
    <property type="component" value="Chromosome"/>
</dbReference>
<dbReference type="GO" id="GO:0005886">
    <property type="term" value="C:plasma membrane"/>
    <property type="evidence" value="ECO:0007669"/>
    <property type="project" value="UniProtKB-SubCell"/>
</dbReference>
<dbReference type="GO" id="GO:1901505">
    <property type="term" value="F:carbohydrate derivative transmembrane transporter activity"/>
    <property type="evidence" value="ECO:0007669"/>
    <property type="project" value="InterPro"/>
</dbReference>
<dbReference type="GO" id="GO:0009245">
    <property type="term" value="P:lipid A biosynthetic process"/>
    <property type="evidence" value="ECO:0007669"/>
    <property type="project" value="UniProtKB-UniRule"/>
</dbReference>
<dbReference type="GO" id="GO:0009103">
    <property type="term" value="P:lipopolysaccharide biosynthetic process"/>
    <property type="evidence" value="ECO:0007669"/>
    <property type="project" value="UniProtKB-UniRule"/>
</dbReference>
<dbReference type="FunFam" id="1.10.3730.20:FF:000002">
    <property type="entry name" value="Probable 4-amino-4-deoxy-L-arabinose-phosphoundecaprenol flippase subunit ArnE"/>
    <property type="match status" value="1"/>
</dbReference>
<dbReference type="Gene3D" id="1.10.3730.20">
    <property type="match status" value="1"/>
</dbReference>
<dbReference type="HAMAP" id="MF_01869">
    <property type="entry name" value="Flippase_ArnE"/>
    <property type="match status" value="1"/>
</dbReference>
<dbReference type="InterPro" id="IPR000620">
    <property type="entry name" value="EamA_dom"/>
</dbReference>
<dbReference type="InterPro" id="IPR022883">
    <property type="entry name" value="Flippase_ArnE"/>
</dbReference>
<dbReference type="InterPro" id="IPR000390">
    <property type="entry name" value="Small_drug/metabolite_transptr"/>
</dbReference>
<dbReference type="NCBIfam" id="NF011625">
    <property type="entry name" value="PRK15051.1"/>
    <property type="match status" value="1"/>
</dbReference>
<dbReference type="PANTHER" id="PTHR30561:SF23">
    <property type="entry name" value="4-AMINO-4-DEOXY-L-ARABINOSE-PHOSPHOUNDECAPRENOL FLIPPASE SUBUNIT ARNE-RELATED"/>
    <property type="match status" value="1"/>
</dbReference>
<dbReference type="PANTHER" id="PTHR30561">
    <property type="entry name" value="SMR FAMILY PROTON-DEPENDENT DRUG EFFLUX TRANSPORTER SUGE"/>
    <property type="match status" value="1"/>
</dbReference>
<dbReference type="Pfam" id="PF00892">
    <property type="entry name" value="EamA"/>
    <property type="match status" value="1"/>
</dbReference>
<dbReference type="SUPFAM" id="SSF103481">
    <property type="entry name" value="Multidrug resistance efflux transporter EmrE"/>
    <property type="match status" value="1"/>
</dbReference>
<comment type="function">
    <text evidence="1">Translocates 4-amino-4-deoxy-L-arabinose-phosphoundecaprenol (alpha-L-Ara4N-phosphoundecaprenol) from the cytoplasmic to the periplasmic side of the inner membrane.</text>
</comment>
<comment type="pathway">
    <text evidence="1">Bacterial outer membrane biogenesis; lipopolysaccharide biosynthesis.</text>
</comment>
<comment type="subunit">
    <text evidence="1">Heterodimer of ArnE and ArnF.</text>
</comment>
<comment type="subcellular location">
    <subcellularLocation>
        <location evidence="1">Cell inner membrane</location>
        <topology evidence="1">Multi-pass membrane protein</topology>
    </subcellularLocation>
</comment>
<comment type="similarity">
    <text evidence="1">Belongs to the ArnE family.</text>
</comment>
<organism>
    <name type="scientific">Shigella boydii serotype 4 (strain Sb227)</name>
    <dbReference type="NCBI Taxonomy" id="300268"/>
    <lineage>
        <taxon>Bacteria</taxon>
        <taxon>Pseudomonadati</taxon>
        <taxon>Pseudomonadota</taxon>
        <taxon>Gammaproteobacteria</taxon>
        <taxon>Enterobacterales</taxon>
        <taxon>Enterobacteriaceae</taxon>
        <taxon>Shigella</taxon>
    </lineage>
</organism>
<sequence>MIWLTLVFASLLSVAGQLCQKQATCFVAINKRRKHIVLWLGLALACLGLAMVLWLLVLQNVPVGIAYPMLSLNFVWVTLAAVKLWHEPVSPRHWCGVAFIIGGIVILGSTV</sequence>